<reference key="1">
    <citation type="journal article" date="2009" name="PLoS Genet.">
        <title>Alliance of proteomics and genomics to unravel the specificities of Sahara bacterium Deinococcus deserti.</title>
        <authorList>
            <person name="de Groot A."/>
            <person name="Dulermo R."/>
            <person name="Ortet P."/>
            <person name="Blanchard L."/>
            <person name="Guerin P."/>
            <person name="Fernandez B."/>
            <person name="Vacherie B."/>
            <person name="Dossat C."/>
            <person name="Jolivet E."/>
            <person name="Siguier P."/>
            <person name="Chandler M."/>
            <person name="Barakat M."/>
            <person name="Dedieu A."/>
            <person name="Barbe V."/>
            <person name="Heulin T."/>
            <person name="Sommer S."/>
            <person name="Achouak W."/>
            <person name="Armengaud J."/>
        </authorList>
    </citation>
    <scope>NUCLEOTIDE SEQUENCE [LARGE SCALE GENOMIC DNA]</scope>
    <source>
        <strain>DSM 17065 / CIP 109153 / LMG 22923 / VCD115</strain>
    </source>
</reference>
<proteinExistence type="inferred from homology"/>
<organism>
    <name type="scientific">Deinococcus deserti (strain DSM 17065 / CIP 109153 / LMG 22923 / VCD115)</name>
    <dbReference type="NCBI Taxonomy" id="546414"/>
    <lineage>
        <taxon>Bacteria</taxon>
        <taxon>Thermotogati</taxon>
        <taxon>Deinococcota</taxon>
        <taxon>Deinococci</taxon>
        <taxon>Deinococcales</taxon>
        <taxon>Deinococcaceae</taxon>
        <taxon>Deinococcus</taxon>
    </lineage>
</organism>
<evidence type="ECO:0000255" key="1">
    <source>
        <dbReference type="HAMAP-Rule" id="MF_00120"/>
    </source>
</evidence>
<keyword id="KW-0067">ATP-binding</keyword>
<keyword id="KW-0436">Ligase</keyword>
<keyword id="KW-0547">Nucleotide-binding</keyword>
<keyword id="KW-0648">Protein biosynthesis</keyword>
<keyword id="KW-1185">Reference proteome</keyword>
<feature type="chain" id="PRO_1000203030" description="Glutamyl-tRNA(Gln) amidotransferase subunit A">
    <location>
        <begin position="1"/>
        <end position="487"/>
    </location>
</feature>
<feature type="active site" description="Charge relay system" evidence="1">
    <location>
        <position position="75"/>
    </location>
</feature>
<feature type="active site" description="Charge relay system" evidence="1">
    <location>
        <position position="150"/>
    </location>
</feature>
<feature type="active site" description="Acyl-ester intermediate" evidence="1">
    <location>
        <position position="174"/>
    </location>
</feature>
<dbReference type="EC" id="6.3.5.7" evidence="1"/>
<dbReference type="EMBL" id="CP001114">
    <property type="protein sequence ID" value="ACO45736.1"/>
    <property type="molecule type" value="Genomic_DNA"/>
</dbReference>
<dbReference type="RefSeq" id="WP_012692859.1">
    <property type="nucleotide sequence ID" value="NC_012526.1"/>
</dbReference>
<dbReference type="SMR" id="C1D1L2"/>
<dbReference type="STRING" id="546414.Deide_08620"/>
<dbReference type="PaxDb" id="546414-Deide_08620"/>
<dbReference type="KEGG" id="ddr:Deide_08620"/>
<dbReference type="eggNOG" id="COG0154">
    <property type="taxonomic scope" value="Bacteria"/>
</dbReference>
<dbReference type="HOGENOM" id="CLU_009600_0_3_0"/>
<dbReference type="OrthoDB" id="9811471at2"/>
<dbReference type="Proteomes" id="UP000002208">
    <property type="component" value="Chromosome"/>
</dbReference>
<dbReference type="GO" id="GO:0030956">
    <property type="term" value="C:glutamyl-tRNA(Gln) amidotransferase complex"/>
    <property type="evidence" value="ECO:0007669"/>
    <property type="project" value="InterPro"/>
</dbReference>
<dbReference type="GO" id="GO:0005524">
    <property type="term" value="F:ATP binding"/>
    <property type="evidence" value="ECO:0007669"/>
    <property type="project" value="UniProtKB-KW"/>
</dbReference>
<dbReference type="GO" id="GO:0050567">
    <property type="term" value="F:glutaminyl-tRNA synthase (glutamine-hydrolyzing) activity"/>
    <property type="evidence" value="ECO:0007669"/>
    <property type="project" value="UniProtKB-UniRule"/>
</dbReference>
<dbReference type="GO" id="GO:0006412">
    <property type="term" value="P:translation"/>
    <property type="evidence" value="ECO:0007669"/>
    <property type="project" value="UniProtKB-UniRule"/>
</dbReference>
<dbReference type="Gene3D" id="3.90.1300.10">
    <property type="entry name" value="Amidase signature (AS) domain"/>
    <property type="match status" value="1"/>
</dbReference>
<dbReference type="HAMAP" id="MF_00120">
    <property type="entry name" value="GatA"/>
    <property type="match status" value="1"/>
</dbReference>
<dbReference type="InterPro" id="IPR000120">
    <property type="entry name" value="Amidase"/>
</dbReference>
<dbReference type="InterPro" id="IPR020556">
    <property type="entry name" value="Amidase_CS"/>
</dbReference>
<dbReference type="InterPro" id="IPR023631">
    <property type="entry name" value="Amidase_dom"/>
</dbReference>
<dbReference type="InterPro" id="IPR036928">
    <property type="entry name" value="AS_sf"/>
</dbReference>
<dbReference type="InterPro" id="IPR004412">
    <property type="entry name" value="GatA"/>
</dbReference>
<dbReference type="NCBIfam" id="TIGR00132">
    <property type="entry name" value="gatA"/>
    <property type="match status" value="1"/>
</dbReference>
<dbReference type="PANTHER" id="PTHR11895:SF151">
    <property type="entry name" value="GLUTAMYL-TRNA(GLN) AMIDOTRANSFERASE SUBUNIT A"/>
    <property type="match status" value="1"/>
</dbReference>
<dbReference type="PANTHER" id="PTHR11895">
    <property type="entry name" value="TRANSAMIDASE"/>
    <property type="match status" value="1"/>
</dbReference>
<dbReference type="Pfam" id="PF01425">
    <property type="entry name" value="Amidase"/>
    <property type="match status" value="1"/>
</dbReference>
<dbReference type="SUPFAM" id="SSF75304">
    <property type="entry name" value="Amidase signature (AS) enzymes"/>
    <property type="match status" value="1"/>
</dbReference>
<dbReference type="PROSITE" id="PS00571">
    <property type="entry name" value="AMIDASES"/>
    <property type="match status" value="1"/>
</dbReference>
<comment type="function">
    <text evidence="1">Allows the formation of correctly charged Gln-tRNA(Gln) through the transamidation of misacylated Glu-tRNA(Gln) in organisms which lack glutaminyl-tRNA synthetase. The reaction takes place in the presence of glutamine and ATP through an activated gamma-phospho-Glu-tRNA(Gln).</text>
</comment>
<comment type="catalytic activity">
    <reaction evidence="1">
        <text>L-glutamyl-tRNA(Gln) + L-glutamine + ATP + H2O = L-glutaminyl-tRNA(Gln) + L-glutamate + ADP + phosphate + H(+)</text>
        <dbReference type="Rhea" id="RHEA:17521"/>
        <dbReference type="Rhea" id="RHEA-COMP:9681"/>
        <dbReference type="Rhea" id="RHEA-COMP:9684"/>
        <dbReference type="ChEBI" id="CHEBI:15377"/>
        <dbReference type="ChEBI" id="CHEBI:15378"/>
        <dbReference type="ChEBI" id="CHEBI:29985"/>
        <dbReference type="ChEBI" id="CHEBI:30616"/>
        <dbReference type="ChEBI" id="CHEBI:43474"/>
        <dbReference type="ChEBI" id="CHEBI:58359"/>
        <dbReference type="ChEBI" id="CHEBI:78520"/>
        <dbReference type="ChEBI" id="CHEBI:78521"/>
        <dbReference type="ChEBI" id="CHEBI:456216"/>
        <dbReference type="EC" id="6.3.5.7"/>
    </reaction>
</comment>
<comment type="subunit">
    <text evidence="1">Heterotrimer of A, B and C subunits.</text>
</comment>
<comment type="similarity">
    <text evidence="1">Belongs to the amidase family. GatA subfamily.</text>
</comment>
<gene>
    <name evidence="1" type="primary">gatA</name>
    <name type="ordered locus">Deide_08620</name>
</gene>
<name>GATA_DEIDV</name>
<sequence length="487" mass="50148">MSVQFTATALARAVTAGETTPQALLDQAVARAEAASTLNALVSLNEQAGAQAAEVSRRLAGGEALPLAGVPVIVKDNINVSGTRTTCGSRILATYVSPYTATAAQRLIDAGAVIVGKANMDEFAMGSSTESSASGPTLNPWDLSRVPGGSSGGSAVAVAANLTPVSLGSDTGGSVRQPAALTGVYGLKPTYGRVSRYGLVAYASSLDQIGPFARSAADLALLMNVVAGHDPRDATSLEAPARFQAGAPEDLKGLRVGVIRESLGGNTSAVDAALNTTLEALRAGGATTGEVSIPDLSHAIAAYYLIAMPEASSNLARYDGMVYGQRAPGSDVSEVMTLTREHGFGREVQRRIMIGTYALSSGYYDAYYSKAMKVRRLIAQEFSRAFQEYDVLVTPTSPFPAFRRGEKTSDPLAMYAADVDTVAVNLAGLPAISIPAGFDLAEGGVRLPVGVQFIAPALKDELLVQLAGALEGIGAVQLDSPAGYAAP</sequence>
<accession>C1D1L2</accession>
<protein>
    <recommendedName>
        <fullName evidence="1">Glutamyl-tRNA(Gln) amidotransferase subunit A</fullName>
        <shortName evidence="1">Glu-ADT subunit A</shortName>
        <ecNumber evidence="1">6.3.5.7</ecNumber>
    </recommendedName>
</protein>